<organism>
    <name type="scientific">Yersinia pestis</name>
    <dbReference type="NCBI Taxonomy" id="632"/>
    <lineage>
        <taxon>Bacteria</taxon>
        <taxon>Pseudomonadati</taxon>
        <taxon>Pseudomonadota</taxon>
        <taxon>Gammaproteobacteria</taxon>
        <taxon>Enterobacterales</taxon>
        <taxon>Yersiniaceae</taxon>
        <taxon>Yersinia</taxon>
    </lineage>
</organism>
<comment type="function">
    <text evidence="1">NDH-1 shuttles electrons from NADH, via FMN and iron-sulfur (Fe-S) centers, to quinones in the respiratory chain. The immediate electron acceptor for the enzyme in this species is believed to be ubiquinone. Couples the redox reaction to proton translocation (for every two electrons transferred, four hydrogen ions are translocated across the cytoplasmic membrane), and thus conserves the redox energy in a proton gradient.</text>
</comment>
<comment type="catalytic activity">
    <reaction evidence="1">
        <text>a quinone + NADH + 5 H(+)(in) = a quinol + NAD(+) + 4 H(+)(out)</text>
        <dbReference type="Rhea" id="RHEA:57888"/>
        <dbReference type="ChEBI" id="CHEBI:15378"/>
        <dbReference type="ChEBI" id="CHEBI:24646"/>
        <dbReference type="ChEBI" id="CHEBI:57540"/>
        <dbReference type="ChEBI" id="CHEBI:57945"/>
        <dbReference type="ChEBI" id="CHEBI:132124"/>
    </reaction>
</comment>
<comment type="cofactor">
    <cofactor evidence="1">
        <name>[4Fe-4S] cluster</name>
        <dbReference type="ChEBI" id="CHEBI:49883"/>
    </cofactor>
    <text evidence="1">Binds 2 [4Fe-4S] clusters per subunit.</text>
</comment>
<comment type="subunit">
    <text evidence="1">NDH-1 is composed of 13 different subunits. Subunits NuoA, H, J, K, L, M, N constitute the membrane sector of the complex.</text>
</comment>
<comment type="subcellular location">
    <subcellularLocation>
        <location evidence="1">Cell inner membrane</location>
        <topology evidence="1">Peripheral membrane protein</topology>
    </subcellularLocation>
</comment>
<comment type="similarity">
    <text evidence="1">Belongs to the complex I 23 kDa subunit family.</text>
</comment>
<evidence type="ECO:0000255" key="1">
    <source>
        <dbReference type="HAMAP-Rule" id="MF_01351"/>
    </source>
</evidence>
<protein>
    <recommendedName>
        <fullName evidence="1">NADH-quinone oxidoreductase subunit I</fullName>
        <ecNumber evidence="1">7.1.1.-</ecNumber>
    </recommendedName>
    <alternativeName>
        <fullName evidence="1">NADH dehydrogenase I subunit I</fullName>
    </alternativeName>
    <alternativeName>
        <fullName evidence="1">NDH-1 subunit I</fullName>
    </alternativeName>
</protein>
<sequence>MTLKELVVGFGTQVRSLWMIGLHAFHKRETLMYPEEPVYLPPRYRGRIVLTRDPDGEERCVACNLCAVACPVGCISLQKAEQKDGRWYPEFFRINFSRCIFCGLCEEACPTTAIQLTPDFEMGEFKRQDLVYEKEDLLISGPGKYPEYNFYRMAGMAIDGKQKGEAENEAKPIDVKGLMP</sequence>
<proteinExistence type="inferred from homology"/>
<reference key="1">
    <citation type="journal article" date="2002" name="J. Bacteriol.">
        <title>Genome sequence of Yersinia pestis KIM.</title>
        <authorList>
            <person name="Deng W."/>
            <person name="Burland V."/>
            <person name="Plunkett G. III"/>
            <person name="Boutin A."/>
            <person name="Mayhew G.F."/>
            <person name="Liss P."/>
            <person name="Perna N.T."/>
            <person name="Rose D.J."/>
            <person name="Mau B."/>
            <person name="Zhou S."/>
            <person name="Schwartz D.C."/>
            <person name="Fetherston J.D."/>
            <person name="Lindler L.E."/>
            <person name="Brubaker R.R."/>
            <person name="Plano G.V."/>
            <person name="Straley S.C."/>
            <person name="McDonough K.A."/>
            <person name="Nilles M.L."/>
            <person name="Matson J.S."/>
            <person name="Blattner F.R."/>
            <person name="Perry R.D."/>
        </authorList>
    </citation>
    <scope>NUCLEOTIDE SEQUENCE [LARGE SCALE GENOMIC DNA]</scope>
    <source>
        <strain>KIM10+ / Biovar Mediaevalis</strain>
    </source>
</reference>
<reference key="2">
    <citation type="journal article" date="2001" name="Nature">
        <title>Genome sequence of Yersinia pestis, the causative agent of plague.</title>
        <authorList>
            <person name="Parkhill J."/>
            <person name="Wren B.W."/>
            <person name="Thomson N.R."/>
            <person name="Titball R.W."/>
            <person name="Holden M.T.G."/>
            <person name="Prentice M.B."/>
            <person name="Sebaihia M."/>
            <person name="James K.D."/>
            <person name="Churcher C.M."/>
            <person name="Mungall K.L."/>
            <person name="Baker S."/>
            <person name="Basham D."/>
            <person name="Bentley S.D."/>
            <person name="Brooks K."/>
            <person name="Cerdeno-Tarraga A.-M."/>
            <person name="Chillingworth T."/>
            <person name="Cronin A."/>
            <person name="Davies R.M."/>
            <person name="Davis P."/>
            <person name="Dougan G."/>
            <person name="Feltwell T."/>
            <person name="Hamlin N."/>
            <person name="Holroyd S."/>
            <person name="Jagels K."/>
            <person name="Karlyshev A.V."/>
            <person name="Leather S."/>
            <person name="Moule S."/>
            <person name="Oyston P.C.F."/>
            <person name="Quail M.A."/>
            <person name="Rutherford K.M."/>
            <person name="Simmonds M."/>
            <person name="Skelton J."/>
            <person name="Stevens K."/>
            <person name="Whitehead S."/>
            <person name="Barrell B.G."/>
        </authorList>
    </citation>
    <scope>NUCLEOTIDE SEQUENCE [LARGE SCALE GENOMIC DNA]</scope>
    <source>
        <strain>CO-92 / Biovar Orientalis</strain>
    </source>
</reference>
<reference key="3">
    <citation type="journal article" date="2004" name="DNA Res.">
        <title>Complete genome sequence of Yersinia pestis strain 91001, an isolate avirulent to humans.</title>
        <authorList>
            <person name="Song Y."/>
            <person name="Tong Z."/>
            <person name="Wang J."/>
            <person name="Wang L."/>
            <person name="Guo Z."/>
            <person name="Han Y."/>
            <person name="Zhang J."/>
            <person name="Pei D."/>
            <person name="Zhou D."/>
            <person name="Qin H."/>
            <person name="Pang X."/>
            <person name="Han Y."/>
            <person name="Zhai J."/>
            <person name="Li M."/>
            <person name="Cui B."/>
            <person name="Qi Z."/>
            <person name="Jin L."/>
            <person name="Dai R."/>
            <person name="Chen F."/>
            <person name="Li S."/>
            <person name="Ye C."/>
            <person name="Du Z."/>
            <person name="Lin W."/>
            <person name="Wang J."/>
            <person name="Yu J."/>
            <person name="Yang H."/>
            <person name="Wang J."/>
            <person name="Huang P."/>
            <person name="Yang R."/>
        </authorList>
    </citation>
    <scope>NUCLEOTIDE SEQUENCE [LARGE SCALE GENOMIC DNA]</scope>
    <source>
        <strain>91001 / Biovar Mediaevalis</strain>
    </source>
</reference>
<feature type="chain" id="PRO_0000298561" description="NADH-quinone oxidoreductase subunit I">
    <location>
        <begin position="1"/>
        <end position="180"/>
    </location>
</feature>
<feature type="domain" description="4Fe-4S ferredoxin-type 1" evidence="1">
    <location>
        <begin position="50"/>
        <end position="80"/>
    </location>
</feature>
<feature type="domain" description="4Fe-4S ferredoxin-type 2" evidence="1">
    <location>
        <begin position="90"/>
        <end position="119"/>
    </location>
</feature>
<feature type="binding site" evidence="1">
    <location>
        <position position="60"/>
    </location>
    <ligand>
        <name>[4Fe-4S] cluster</name>
        <dbReference type="ChEBI" id="CHEBI:49883"/>
        <label>1</label>
    </ligand>
</feature>
<feature type="binding site" evidence="1">
    <location>
        <position position="63"/>
    </location>
    <ligand>
        <name>[4Fe-4S] cluster</name>
        <dbReference type="ChEBI" id="CHEBI:49883"/>
        <label>1</label>
    </ligand>
</feature>
<feature type="binding site" evidence="1">
    <location>
        <position position="66"/>
    </location>
    <ligand>
        <name>[4Fe-4S] cluster</name>
        <dbReference type="ChEBI" id="CHEBI:49883"/>
        <label>1</label>
    </ligand>
</feature>
<feature type="binding site" evidence="1">
    <location>
        <position position="70"/>
    </location>
    <ligand>
        <name>[4Fe-4S] cluster</name>
        <dbReference type="ChEBI" id="CHEBI:49883"/>
        <label>2</label>
    </ligand>
</feature>
<feature type="binding site" evidence="1">
    <location>
        <position position="99"/>
    </location>
    <ligand>
        <name>[4Fe-4S] cluster</name>
        <dbReference type="ChEBI" id="CHEBI:49883"/>
        <label>2</label>
    </ligand>
</feature>
<feature type="binding site" evidence="1">
    <location>
        <position position="102"/>
    </location>
    <ligand>
        <name>[4Fe-4S] cluster</name>
        <dbReference type="ChEBI" id="CHEBI:49883"/>
        <label>2</label>
    </ligand>
</feature>
<feature type="binding site" evidence="1">
    <location>
        <position position="105"/>
    </location>
    <ligand>
        <name>[4Fe-4S] cluster</name>
        <dbReference type="ChEBI" id="CHEBI:49883"/>
        <label>2</label>
    </ligand>
</feature>
<feature type="binding site" evidence="1">
    <location>
        <position position="109"/>
    </location>
    <ligand>
        <name>[4Fe-4S] cluster</name>
        <dbReference type="ChEBI" id="CHEBI:49883"/>
        <label>1</label>
    </ligand>
</feature>
<name>NUOI_YERPE</name>
<accession>Q7CJ89</accession>
<accession>Q74T33</accession>
<keyword id="KW-0004">4Fe-4S</keyword>
<keyword id="KW-0997">Cell inner membrane</keyword>
<keyword id="KW-1003">Cell membrane</keyword>
<keyword id="KW-0408">Iron</keyword>
<keyword id="KW-0411">Iron-sulfur</keyword>
<keyword id="KW-0472">Membrane</keyword>
<keyword id="KW-0479">Metal-binding</keyword>
<keyword id="KW-0520">NAD</keyword>
<keyword id="KW-0874">Quinone</keyword>
<keyword id="KW-1185">Reference proteome</keyword>
<keyword id="KW-0677">Repeat</keyword>
<keyword id="KW-1278">Translocase</keyword>
<keyword id="KW-0830">Ubiquinone</keyword>
<gene>
    <name evidence="1" type="primary">nuoI</name>
    <name type="ordered locus">YPO2548</name>
    <name type="ordered locus">y1637</name>
    <name type="ordered locus">YP_2359</name>
</gene>
<dbReference type="EC" id="7.1.1.-" evidence="1"/>
<dbReference type="EMBL" id="AE009952">
    <property type="protein sequence ID" value="AAM85206.1"/>
    <property type="molecule type" value="Genomic_DNA"/>
</dbReference>
<dbReference type="EMBL" id="AE017042">
    <property type="protein sequence ID" value="AAS62564.1"/>
    <property type="molecule type" value="Genomic_DNA"/>
</dbReference>
<dbReference type="EMBL" id="AL590842">
    <property type="protein sequence ID" value="CAL21173.1"/>
    <property type="molecule type" value="Genomic_DNA"/>
</dbReference>
<dbReference type="PIR" id="AB0311">
    <property type="entry name" value="AB0311"/>
</dbReference>
<dbReference type="RefSeq" id="WP_002210273.1">
    <property type="nucleotide sequence ID" value="NZ_WUCM01000021.1"/>
</dbReference>
<dbReference type="RefSeq" id="YP_002347509.1">
    <property type="nucleotide sequence ID" value="NC_003143.1"/>
</dbReference>
<dbReference type="SMR" id="Q7CJ89"/>
<dbReference type="STRING" id="214092.YPO2548"/>
<dbReference type="PaxDb" id="214092-YPO2548"/>
<dbReference type="DNASU" id="1146584"/>
<dbReference type="EnsemblBacteria" id="AAS62564">
    <property type="protein sequence ID" value="AAS62564"/>
    <property type="gene ID" value="YP_2359"/>
</dbReference>
<dbReference type="GeneID" id="96666079"/>
<dbReference type="KEGG" id="ype:YPO2548"/>
<dbReference type="KEGG" id="ypk:y1637"/>
<dbReference type="KEGG" id="ypm:YP_2359"/>
<dbReference type="PATRIC" id="fig|214092.21.peg.2972"/>
<dbReference type="eggNOG" id="COG1143">
    <property type="taxonomic scope" value="Bacteria"/>
</dbReference>
<dbReference type="HOGENOM" id="CLU_067218_4_3_6"/>
<dbReference type="OMA" id="WYPDFFR"/>
<dbReference type="OrthoDB" id="9808559at2"/>
<dbReference type="Proteomes" id="UP000000815">
    <property type="component" value="Chromosome"/>
</dbReference>
<dbReference type="Proteomes" id="UP000001019">
    <property type="component" value="Chromosome"/>
</dbReference>
<dbReference type="Proteomes" id="UP000002490">
    <property type="component" value="Chromosome"/>
</dbReference>
<dbReference type="GO" id="GO:0005886">
    <property type="term" value="C:plasma membrane"/>
    <property type="evidence" value="ECO:0007669"/>
    <property type="project" value="UniProtKB-SubCell"/>
</dbReference>
<dbReference type="GO" id="GO:0045271">
    <property type="term" value="C:respiratory chain complex I"/>
    <property type="evidence" value="ECO:0000318"/>
    <property type="project" value="GO_Central"/>
</dbReference>
<dbReference type="GO" id="GO:0051539">
    <property type="term" value="F:4 iron, 4 sulfur cluster binding"/>
    <property type="evidence" value="ECO:0007669"/>
    <property type="project" value="UniProtKB-KW"/>
</dbReference>
<dbReference type="GO" id="GO:0005506">
    <property type="term" value="F:iron ion binding"/>
    <property type="evidence" value="ECO:0007669"/>
    <property type="project" value="UniProtKB-UniRule"/>
</dbReference>
<dbReference type="GO" id="GO:0050136">
    <property type="term" value="F:NADH:ubiquinone reductase (non-electrogenic) activity"/>
    <property type="evidence" value="ECO:0007669"/>
    <property type="project" value="UniProtKB-UniRule"/>
</dbReference>
<dbReference type="GO" id="GO:0048038">
    <property type="term" value="F:quinone binding"/>
    <property type="evidence" value="ECO:0007669"/>
    <property type="project" value="UniProtKB-KW"/>
</dbReference>
<dbReference type="GO" id="GO:0009060">
    <property type="term" value="P:aerobic respiration"/>
    <property type="evidence" value="ECO:0000318"/>
    <property type="project" value="GO_Central"/>
</dbReference>
<dbReference type="FunFam" id="3.30.70.3270:FF:000002">
    <property type="entry name" value="NADH-quinone oxidoreductase subunit I"/>
    <property type="match status" value="1"/>
</dbReference>
<dbReference type="Gene3D" id="3.30.70.3270">
    <property type="match status" value="1"/>
</dbReference>
<dbReference type="HAMAP" id="MF_01351">
    <property type="entry name" value="NDH1_NuoI"/>
    <property type="match status" value="1"/>
</dbReference>
<dbReference type="InterPro" id="IPR017896">
    <property type="entry name" value="4Fe4S_Fe-S-bd"/>
</dbReference>
<dbReference type="InterPro" id="IPR017900">
    <property type="entry name" value="4Fe4S_Fe_S_CS"/>
</dbReference>
<dbReference type="InterPro" id="IPR010226">
    <property type="entry name" value="NADH_quinone_OxRdtase_chainI"/>
</dbReference>
<dbReference type="NCBIfam" id="TIGR01971">
    <property type="entry name" value="NuoI"/>
    <property type="match status" value="1"/>
</dbReference>
<dbReference type="NCBIfam" id="NF004536">
    <property type="entry name" value="PRK05888.1-1"/>
    <property type="match status" value="1"/>
</dbReference>
<dbReference type="PANTHER" id="PTHR10849:SF20">
    <property type="entry name" value="NADH DEHYDROGENASE [UBIQUINONE] IRON-SULFUR PROTEIN 8, MITOCHONDRIAL"/>
    <property type="match status" value="1"/>
</dbReference>
<dbReference type="PANTHER" id="PTHR10849">
    <property type="entry name" value="NADH DEHYDROGENASE UBIQUINONE IRON-SULFUR PROTEIN 8, MITOCHONDRIAL"/>
    <property type="match status" value="1"/>
</dbReference>
<dbReference type="Pfam" id="PF12838">
    <property type="entry name" value="Fer4_7"/>
    <property type="match status" value="1"/>
</dbReference>
<dbReference type="SUPFAM" id="SSF54862">
    <property type="entry name" value="4Fe-4S ferredoxins"/>
    <property type="match status" value="1"/>
</dbReference>
<dbReference type="PROSITE" id="PS00198">
    <property type="entry name" value="4FE4S_FER_1"/>
    <property type="match status" value="2"/>
</dbReference>
<dbReference type="PROSITE" id="PS51379">
    <property type="entry name" value="4FE4S_FER_2"/>
    <property type="match status" value="2"/>
</dbReference>